<reference key="1">
    <citation type="journal article" date="2002" name="J. Bacteriol.">
        <title>Genome sequence of Yersinia pestis KIM.</title>
        <authorList>
            <person name="Deng W."/>
            <person name="Burland V."/>
            <person name="Plunkett G. III"/>
            <person name="Boutin A."/>
            <person name="Mayhew G.F."/>
            <person name="Liss P."/>
            <person name="Perna N.T."/>
            <person name="Rose D.J."/>
            <person name="Mau B."/>
            <person name="Zhou S."/>
            <person name="Schwartz D.C."/>
            <person name="Fetherston J.D."/>
            <person name="Lindler L.E."/>
            <person name="Brubaker R.R."/>
            <person name="Plano G.V."/>
            <person name="Straley S.C."/>
            <person name="McDonough K.A."/>
            <person name="Nilles M.L."/>
            <person name="Matson J.S."/>
            <person name="Blattner F.R."/>
            <person name="Perry R.D."/>
        </authorList>
    </citation>
    <scope>NUCLEOTIDE SEQUENCE [LARGE SCALE GENOMIC DNA]</scope>
    <source>
        <strain>KIM10+ / Biovar Mediaevalis</strain>
    </source>
</reference>
<reference key="2">
    <citation type="journal article" date="2001" name="Nature">
        <title>Genome sequence of Yersinia pestis, the causative agent of plague.</title>
        <authorList>
            <person name="Parkhill J."/>
            <person name="Wren B.W."/>
            <person name="Thomson N.R."/>
            <person name="Titball R.W."/>
            <person name="Holden M.T.G."/>
            <person name="Prentice M.B."/>
            <person name="Sebaihia M."/>
            <person name="James K.D."/>
            <person name="Churcher C.M."/>
            <person name="Mungall K.L."/>
            <person name="Baker S."/>
            <person name="Basham D."/>
            <person name="Bentley S.D."/>
            <person name="Brooks K."/>
            <person name="Cerdeno-Tarraga A.-M."/>
            <person name="Chillingworth T."/>
            <person name="Cronin A."/>
            <person name="Davies R.M."/>
            <person name="Davis P."/>
            <person name="Dougan G."/>
            <person name="Feltwell T."/>
            <person name="Hamlin N."/>
            <person name="Holroyd S."/>
            <person name="Jagels K."/>
            <person name="Karlyshev A.V."/>
            <person name="Leather S."/>
            <person name="Moule S."/>
            <person name="Oyston P.C.F."/>
            <person name="Quail M.A."/>
            <person name="Rutherford K.M."/>
            <person name="Simmonds M."/>
            <person name="Skelton J."/>
            <person name="Stevens K."/>
            <person name="Whitehead S."/>
            <person name="Barrell B.G."/>
        </authorList>
    </citation>
    <scope>NUCLEOTIDE SEQUENCE [LARGE SCALE GENOMIC DNA]</scope>
    <source>
        <strain>CO-92 / Biovar Orientalis</strain>
    </source>
</reference>
<reference key="3">
    <citation type="journal article" date="2004" name="DNA Res.">
        <title>Complete genome sequence of Yersinia pestis strain 91001, an isolate avirulent to humans.</title>
        <authorList>
            <person name="Song Y."/>
            <person name="Tong Z."/>
            <person name="Wang J."/>
            <person name="Wang L."/>
            <person name="Guo Z."/>
            <person name="Han Y."/>
            <person name="Zhang J."/>
            <person name="Pei D."/>
            <person name="Zhou D."/>
            <person name="Qin H."/>
            <person name="Pang X."/>
            <person name="Han Y."/>
            <person name="Zhai J."/>
            <person name="Li M."/>
            <person name="Cui B."/>
            <person name="Qi Z."/>
            <person name="Jin L."/>
            <person name="Dai R."/>
            <person name="Chen F."/>
            <person name="Li S."/>
            <person name="Ye C."/>
            <person name="Du Z."/>
            <person name="Lin W."/>
            <person name="Wang J."/>
            <person name="Yu J."/>
            <person name="Yang H."/>
            <person name="Wang J."/>
            <person name="Huang P."/>
            <person name="Yang R."/>
        </authorList>
    </citation>
    <scope>NUCLEOTIDE SEQUENCE [LARGE SCALE GENOMIC DNA]</scope>
    <source>
        <strain>91001 / Biovar Mediaevalis</strain>
    </source>
</reference>
<evidence type="ECO:0000255" key="1">
    <source>
        <dbReference type="HAMAP-Rule" id="MF_01866"/>
    </source>
</evidence>
<protein>
    <recommendedName>
        <fullName evidence="1">YcgL domain-containing protein YPO2080/y2231/YP_1923</fullName>
    </recommendedName>
</protein>
<proteinExistence type="inferred from homology"/>
<accession>Q7CID0</accession>
<accession>Q74U31</accession>
<name>Y2080_YERPE</name>
<sequence length="90" mass="10227">MLCAIYRSPKRDQTYLYIEKKDDFSRVPAELLASFGKPQFAMLLALNERKTLATADVEKVKNALIEQGFYLQVPPPPESLLKMHLGETKA</sequence>
<gene>
    <name type="ordered locus">YPO2080</name>
    <name type="ordered locus">y2231</name>
    <name type="ordered locus">YP_1923</name>
</gene>
<keyword id="KW-1185">Reference proteome</keyword>
<feature type="chain" id="PRO_0000375411" description="YcgL domain-containing protein YPO2080/y2231/YP_1923">
    <location>
        <begin position="1"/>
        <end position="90"/>
    </location>
</feature>
<feature type="domain" description="YcgL" evidence="1">
    <location>
        <begin position="1"/>
        <end position="85"/>
    </location>
</feature>
<dbReference type="EMBL" id="AE009952">
    <property type="protein sequence ID" value="AAM85791.1"/>
    <property type="molecule type" value="Genomic_DNA"/>
</dbReference>
<dbReference type="EMBL" id="AE017042">
    <property type="protein sequence ID" value="AAS62141.1"/>
    <property type="molecule type" value="Genomic_DNA"/>
</dbReference>
<dbReference type="EMBL" id="AL590842">
    <property type="protein sequence ID" value="CAL20715.1"/>
    <property type="molecule type" value="Genomic_DNA"/>
</dbReference>
<dbReference type="PIR" id="AH0253">
    <property type="entry name" value="AH0253"/>
</dbReference>
<dbReference type="RefSeq" id="WP_002211743.1">
    <property type="nucleotide sequence ID" value="NZ_WUCM01000062.1"/>
</dbReference>
<dbReference type="RefSeq" id="YP_002347062.1">
    <property type="nucleotide sequence ID" value="NC_003143.1"/>
</dbReference>
<dbReference type="SMR" id="Q7CID0"/>
<dbReference type="STRING" id="214092.YPO2080"/>
<dbReference type="PaxDb" id="214092-YPO2080"/>
<dbReference type="DNASU" id="1147178"/>
<dbReference type="EnsemblBacteria" id="AAS62141">
    <property type="protein sequence ID" value="AAS62141"/>
    <property type="gene ID" value="YP_1923"/>
</dbReference>
<dbReference type="KEGG" id="ype:YPO2080"/>
<dbReference type="KEGG" id="ypk:y2231"/>
<dbReference type="KEGG" id="ypm:YP_1923"/>
<dbReference type="PATRIC" id="fig|214092.21.peg.2469"/>
<dbReference type="eggNOG" id="COG3100">
    <property type="taxonomic scope" value="Bacteria"/>
</dbReference>
<dbReference type="HOGENOM" id="CLU_155118_1_0_6"/>
<dbReference type="OMA" id="MHCDIYK"/>
<dbReference type="OrthoDB" id="7062382at2"/>
<dbReference type="Proteomes" id="UP000000815">
    <property type="component" value="Chromosome"/>
</dbReference>
<dbReference type="Proteomes" id="UP000001019">
    <property type="component" value="Chromosome"/>
</dbReference>
<dbReference type="Proteomes" id="UP000002490">
    <property type="component" value="Chromosome"/>
</dbReference>
<dbReference type="Gene3D" id="3.10.510.20">
    <property type="entry name" value="YcgL domain"/>
    <property type="match status" value="1"/>
</dbReference>
<dbReference type="HAMAP" id="MF_01866">
    <property type="entry name" value="UPF0745"/>
    <property type="match status" value="1"/>
</dbReference>
<dbReference type="InterPro" id="IPR038068">
    <property type="entry name" value="YcgL-like_sf"/>
</dbReference>
<dbReference type="InterPro" id="IPR027354">
    <property type="entry name" value="YcgL_dom"/>
</dbReference>
<dbReference type="PANTHER" id="PTHR38109">
    <property type="entry name" value="PROTEIN YCGL"/>
    <property type="match status" value="1"/>
</dbReference>
<dbReference type="PANTHER" id="PTHR38109:SF1">
    <property type="entry name" value="PROTEIN YCGL"/>
    <property type="match status" value="1"/>
</dbReference>
<dbReference type="Pfam" id="PF05166">
    <property type="entry name" value="YcgL"/>
    <property type="match status" value="1"/>
</dbReference>
<dbReference type="SUPFAM" id="SSF160191">
    <property type="entry name" value="YcgL-like"/>
    <property type="match status" value="1"/>
</dbReference>
<dbReference type="PROSITE" id="PS51648">
    <property type="entry name" value="YCGL"/>
    <property type="match status" value="1"/>
</dbReference>
<organism>
    <name type="scientific">Yersinia pestis</name>
    <dbReference type="NCBI Taxonomy" id="632"/>
    <lineage>
        <taxon>Bacteria</taxon>
        <taxon>Pseudomonadati</taxon>
        <taxon>Pseudomonadota</taxon>
        <taxon>Gammaproteobacteria</taxon>
        <taxon>Enterobacterales</taxon>
        <taxon>Yersiniaceae</taxon>
        <taxon>Yersinia</taxon>
    </lineage>
</organism>